<accession>A5EK34</accession>
<sequence>MLTRKQYELLRFINERLKEAGVPPSFDEMKDALDLRSKSGIHRLITALEERGFIRRLPNRARAIEVIKLPELSQAASNRRGFTPSVIEGNLGKVRTSTPALDDGERPVAVPVMGRIAAGTPIEALQTRSHTISVPADMLGNGDHYALEVRGDSMVDAGILDGDMALIQRNETADTGDIVVALIDDEEATLKRFRRRGASIALEPANTAYEVRILPPNRVKIQGKLVGLYRKY</sequence>
<feature type="chain" id="PRO_1000001261" description="LexA repressor">
    <location>
        <begin position="1"/>
        <end position="232"/>
    </location>
</feature>
<feature type="DNA-binding region" description="H-T-H motif" evidence="1">
    <location>
        <begin position="26"/>
        <end position="46"/>
    </location>
</feature>
<feature type="active site" description="For autocatalytic cleavage activity" evidence="1">
    <location>
        <position position="153"/>
    </location>
</feature>
<feature type="active site" description="For autocatalytic cleavage activity" evidence="1">
    <location>
        <position position="191"/>
    </location>
</feature>
<feature type="site" description="Cleavage; by autolysis" evidence="1">
    <location>
        <begin position="118"/>
        <end position="119"/>
    </location>
</feature>
<gene>
    <name evidence="1" type="primary">lexA</name>
    <name type="ordered locus">BBta_4496</name>
</gene>
<comment type="function">
    <text evidence="1">Represses a number of genes involved in the response to DNA damage (SOS response), including recA and lexA. In the presence of single-stranded DNA, RecA interacts with LexA causing an autocatalytic cleavage which disrupts the DNA-binding part of LexA, leading to derepression of the SOS regulon and eventually DNA repair.</text>
</comment>
<comment type="catalytic activity">
    <reaction evidence="1">
        <text>Hydrolysis of Ala-|-Gly bond in repressor LexA.</text>
        <dbReference type="EC" id="3.4.21.88"/>
    </reaction>
</comment>
<comment type="subunit">
    <text evidence="1">Homodimer.</text>
</comment>
<comment type="similarity">
    <text evidence="1">Belongs to the peptidase S24 family.</text>
</comment>
<evidence type="ECO:0000255" key="1">
    <source>
        <dbReference type="HAMAP-Rule" id="MF_00015"/>
    </source>
</evidence>
<name>LEXA_BRASB</name>
<keyword id="KW-0068">Autocatalytic cleavage</keyword>
<keyword id="KW-0227">DNA damage</keyword>
<keyword id="KW-0234">DNA repair</keyword>
<keyword id="KW-0235">DNA replication</keyword>
<keyword id="KW-0238">DNA-binding</keyword>
<keyword id="KW-0378">Hydrolase</keyword>
<keyword id="KW-1185">Reference proteome</keyword>
<keyword id="KW-0678">Repressor</keyword>
<keyword id="KW-0742">SOS response</keyword>
<keyword id="KW-0804">Transcription</keyword>
<keyword id="KW-0805">Transcription regulation</keyword>
<protein>
    <recommendedName>
        <fullName evidence="1">LexA repressor</fullName>
        <ecNumber evidence="1">3.4.21.88</ecNumber>
    </recommendedName>
</protein>
<proteinExistence type="inferred from homology"/>
<dbReference type="EC" id="3.4.21.88" evidence="1"/>
<dbReference type="EMBL" id="CP000494">
    <property type="protein sequence ID" value="ABQ36528.1"/>
    <property type="molecule type" value="Genomic_DNA"/>
</dbReference>
<dbReference type="RefSeq" id="WP_012044524.1">
    <property type="nucleotide sequence ID" value="NC_009485.1"/>
</dbReference>
<dbReference type="SMR" id="A5EK34"/>
<dbReference type="STRING" id="288000.BBta_4496"/>
<dbReference type="MEROPS" id="S24.001"/>
<dbReference type="KEGG" id="bbt:BBta_4496"/>
<dbReference type="eggNOG" id="COG1974">
    <property type="taxonomic scope" value="Bacteria"/>
</dbReference>
<dbReference type="HOGENOM" id="CLU_066192_45_2_5"/>
<dbReference type="OrthoDB" id="9802364at2"/>
<dbReference type="Proteomes" id="UP000000246">
    <property type="component" value="Chromosome"/>
</dbReference>
<dbReference type="GO" id="GO:0003677">
    <property type="term" value="F:DNA binding"/>
    <property type="evidence" value="ECO:0007669"/>
    <property type="project" value="UniProtKB-UniRule"/>
</dbReference>
<dbReference type="GO" id="GO:0004252">
    <property type="term" value="F:serine-type endopeptidase activity"/>
    <property type="evidence" value="ECO:0007669"/>
    <property type="project" value="UniProtKB-UniRule"/>
</dbReference>
<dbReference type="GO" id="GO:0006281">
    <property type="term" value="P:DNA repair"/>
    <property type="evidence" value="ECO:0007669"/>
    <property type="project" value="UniProtKB-UniRule"/>
</dbReference>
<dbReference type="GO" id="GO:0006260">
    <property type="term" value="P:DNA replication"/>
    <property type="evidence" value="ECO:0007669"/>
    <property type="project" value="UniProtKB-UniRule"/>
</dbReference>
<dbReference type="GO" id="GO:0045892">
    <property type="term" value="P:negative regulation of DNA-templated transcription"/>
    <property type="evidence" value="ECO:0007669"/>
    <property type="project" value="UniProtKB-UniRule"/>
</dbReference>
<dbReference type="GO" id="GO:0006508">
    <property type="term" value="P:proteolysis"/>
    <property type="evidence" value="ECO:0007669"/>
    <property type="project" value="InterPro"/>
</dbReference>
<dbReference type="GO" id="GO:0009432">
    <property type="term" value="P:SOS response"/>
    <property type="evidence" value="ECO:0007669"/>
    <property type="project" value="UniProtKB-UniRule"/>
</dbReference>
<dbReference type="CDD" id="cd06529">
    <property type="entry name" value="S24_LexA-like"/>
    <property type="match status" value="1"/>
</dbReference>
<dbReference type="FunFam" id="1.10.10.10:FF:000102">
    <property type="entry name" value="LexA repressor"/>
    <property type="match status" value="1"/>
</dbReference>
<dbReference type="FunFam" id="2.10.109.10:FF:000001">
    <property type="entry name" value="LexA repressor"/>
    <property type="match status" value="1"/>
</dbReference>
<dbReference type="Gene3D" id="2.10.109.10">
    <property type="entry name" value="Umud Fragment, subunit A"/>
    <property type="match status" value="1"/>
</dbReference>
<dbReference type="Gene3D" id="1.10.10.10">
    <property type="entry name" value="Winged helix-like DNA-binding domain superfamily/Winged helix DNA-binding domain"/>
    <property type="match status" value="1"/>
</dbReference>
<dbReference type="HAMAP" id="MF_00015">
    <property type="entry name" value="LexA"/>
    <property type="match status" value="1"/>
</dbReference>
<dbReference type="InterPro" id="IPR006200">
    <property type="entry name" value="LexA"/>
</dbReference>
<dbReference type="InterPro" id="IPR039418">
    <property type="entry name" value="LexA-like"/>
</dbReference>
<dbReference type="InterPro" id="IPR036286">
    <property type="entry name" value="LexA/Signal_pep-like_sf"/>
</dbReference>
<dbReference type="InterPro" id="IPR006199">
    <property type="entry name" value="LexA_DNA-bd_dom"/>
</dbReference>
<dbReference type="InterPro" id="IPR050077">
    <property type="entry name" value="LexA_repressor"/>
</dbReference>
<dbReference type="InterPro" id="IPR006197">
    <property type="entry name" value="Peptidase_S24_LexA"/>
</dbReference>
<dbReference type="InterPro" id="IPR015927">
    <property type="entry name" value="Peptidase_S24_S26A/B/C"/>
</dbReference>
<dbReference type="InterPro" id="IPR036388">
    <property type="entry name" value="WH-like_DNA-bd_sf"/>
</dbReference>
<dbReference type="InterPro" id="IPR036390">
    <property type="entry name" value="WH_DNA-bd_sf"/>
</dbReference>
<dbReference type="NCBIfam" id="TIGR00498">
    <property type="entry name" value="lexA"/>
    <property type="match status" value="1"/>
</dbReference>
<dbReference type="PANTHER" id="PTHR33516">
    <property type="entry name" value="LEXA REPRESSOR"/>
    <property type="match status" value="1"/>
</dbReference>
<dbReference type="PANTHER" id="PTHR33516:SF2">
    <property type="entry name" value="LEXA REPRESSOR-RELATED"/>
    <property type="match status" value="1"/>
</dbReference>
<dbReference type="Pfam" id="PF01726">
    <property type="entry name" value="LexA_DNA_bind"/>
    <property type="match status" value="1"/>
</dbReference>
<dbReference type="Pfam" id="PF00717">
    <property type="entry name" value="Peptidase_S24"/>
    <property type="match status" value="1"/>
</dbReference>
<dbReference type="PRINTS" id="PR00726">
    <property type="entry name" value="LEXASERPTASE"/>
</dbReference>
<dbReference type="SUPFAM" id="SSF51306">
    <property type="entry name" value="LexA/Signal peptidase"/>
    <property type="match status" value="1"/>
</dbReference>
<dbReference type="SUPFAM" id="SSF46785">
    <property type="entry name" value="Winged helix' DNA-binding domain"/>
    <property type="match status" value="1"/>
</dbReference>
<reference key="1">
    <citation type="journal article" date="2007" name="Science">
        <title>Legumes symbioses: absence of nod genes in photosynthetic bradyrhizobia.</title>
        <authorList>
            <person name="Giraud E."/>
            <person name="Moulin L."/>
            <person name="Vallenet D."/>
            <person name="Barbe V."/>
            <person name="Cytryn E."/>
            <person name="Avarre J.-C."/>
            <person name="Jaubert M."/>
            <person name="Simon D."/>
            <person name="Cartieaux F."/>
            <person name="Prin Y."/>
            <person name="Bena G."/>
            <person name="Hannibal L."/>
            <person name="Fardoux J."/>
            <person name="Kojadinovic M."/>
            <person name="Vuillet L."/>
            <person name="Lajus A."/>
            <person name="Cruveiller S."/>
            <person name="Rouy Z."/>
            <person name="Mangenot S."/>
            <person name="Segurens B."/>
            <person name="Dossat C."/>
            <person name="Franck W.L."/>
            <person name="Chang W.-S."/>
            <person name="Saunders E."/>
            <person name="Bruce D."/>
            <person name="Richardson P."/>
            <person name="Normand P."/>
            <person name="Dreyfus B."/>
            <person name="Pignol D."/>
            <person name="Stacey G."/>
            <person name="Emerich D."/>
            <person name="Vermeglio A."/>
            <person name="Medigue C."/>
            <person name="Sadowsky M."/>
        </authorList>
    </citation>
    <scope>NUCLEOTIDE SEQUENCE [LARGE SCALE GENOMIC DNA]</scope>
    <source>
        <strain>BTAi1 / ATCC BAA-1182</strain>
    </source>
</reference>
<organism>
    <name type="scientific">Bradyrhizobium sp. (strain BTAi1 / ATCC BAA-1182)</name>
    <dbReference type="NCBI Taxonomy" id="288000"/>
    <lineage>
        <taxon>Bacteria</taxon>
        <taxon>Pseudomonadati</taxon>
        <taxon>Pseudomonadota</taxon>
        <taxon>Alphaproteobacteria</taxon>
        <taxon>Hyphomicrobiales</taxon>
        <taxon>Nitrobacteraceae</taxon>
        <taxon>Bradyrhizobium</taxon>
    </lineage>
</organism>